<name>Y1856_MYCBO</name>
<protein>
    <recommendedName>
        <fullName>UPF0749 protein Mb1856</fullName>
    </recommendedName>
</protein>
<accession>P64896</accession>
<accession>A0A1R3XZG2</accession>
<accession>Q50608</accession>
<accession>X2BJA8</accession>
<dbReference type="EMBL" id="LT708304">
    <property type="protein sequence ID" value="SIU00460.1"/>
    <property type="molecule type" value="Genomic_DNA"/>
</dbReference>
<dbReference type="RefSeq" id="NP_855508.1">
    <property type="nucleotide sequence ID" value="NC_002945.3"/>
</dbReference>
<dbReference type="RefSeq" id="WP_003899038.1">
    <property type="nucleotide sequence ID" value="NC_002945.4"/>
</dbReference>
<dbReference type="SMR" id="P64896"/>
<dbReference type="KEGG" id="mbo:BQ2027_MB1856"/>
<dbReference type="PATRIC" id="fig|233413.5.peg.2036"/>
<dbReference type="Proteomes" id="UP000001419">
    <property type="component" value="Chromosome"/>
</dbReference>
<dbReference type="GO" id="GO:0005886">
    <property type="term" value="C:plasma membrane"/>
    <property type="evidence" value="ECO:0007669"/>
    <property type="project" value="UniProtKB-SubCell"/>
</dbReference>
<dbReference type="FunFam" id="3.30.70.1880:FF:000002">
    <property type="entry name" value="UPF0749 protein Rv1825"/>
    <property type="match status" value="1"/>
</dbReference>
<dbReference type="Gene3D" id="3.30.70.1880">
    <property type="entry name" value="Protein of unknown function DUF881"/>
    <property type="match status" value="1"/>
</dbReference>
<dbReference type="InterPro" id="IPR010273">
    <property type="entry name" value="DUF881"/>
</dbReference>
<dbReference type="PANTHER" id="PTHR37313">
    <property type="entry name" value="UPF0749 PROTEIN RV1825"/>
    <property type="match status" value="1"/>
</dbReference>
<dbReference type="PANTHER" id="PTHR37313:SF2">
    <property type="entry name" value="UPF0749 PROTEIN YLXX"/>
    <property type="match status" value="1"/>
</dbReference>
<dbReference type="Pfam" id="PF05949">
    <property type="entry name" value="DUF881"/>
    <property type="match status" value="1"/>
</dbReference>
<reference key="1">
    <citation type="journal article" date="2003" name="Proc. Natl. Acad. Sci. U.S.A.">
        <title>The complete genome sequence of Mycobacterium bovis.</title>
        <authorList>
            <person name="Garnier T."/>
            <person name="Eiglmeier K."/>
            <person name="Camus J.-C."/>
            <person name="Medina N."/>
            <person name="Mansoor H."/>
            <person name="Pryor M."/>
            <person name="Duthoy S."/>
            <person name="Grondin S."/>
            <person name="Lacroix C."/>
            <person name="Monsempe C."/>
            <person name="Simon S."/>
            <person name="Harris B."/>
            <person name="Atkin R."/>
            <person name="Doggett J."/>
            <person name="Mayes R."/>
            <person name="Keating L."/>
            <person name="Wheeler P.R."/>
            <person name="Parkhill J."/>
            <person name="Barrell B.G."/>
            <person name="Cole S.T."/>
            <person name="Gordon S.V."/>
            <person name="Hewinson R.G."/>
        </authorList>
    </citation>
    <scope>NUCLEOTIDE SEQUENCE [LARGE SCALE GENOMIC DNA]</scope>
    <source>
        <strain>ATCC BAA-935 / AF2122/97</strain>
    </source>
</reference>
<reference key="2">
    <citation type="journal article" date="2017" name="Genome Announc.">
        <title>Updated reference genome sequence and annotation of Mycobacterium bovis AF2122/97.</title>
        <authorList>
            <person name="Malone K.M."/>
            <person name="Farrell D."/>
            <person name="Stuber T.P."/>
            <person name="Schubert O.T."/>
            <person name="Aebersold R."/>
            <person name="Robbe-Austerman S."/>
            <person name="Gordon S.V."/>
        </authorList>
    </citation>
    <scope>NUCLEOTIDE SEQUENCE [LARGE SCALE GENOMIC DNA]</scope>
    <scope>GENOME REANNOTATION</scope>
    <source>
        <strain>ATCC BAA-935 / AF2122/97</strain>
    </source>
</reference>
<keyword id="KW-1003">Cell membrane</keyword>
<keyword id="KW-0472">Membrane</keyword>
<keyword id="KW-1185">Reference proteome</keyword>
<keyword id="KW-0732">Signal</keyword>
<keyword id="KW-0812">Transmembrane</keyword>
<keyword id="KW-1133">Transmembrane helix</keyword>
<sequence>MSENRPEPVAAETSAATTARHSQADAGAHDAVRRGRHELPADHPRSKVGPLRRTRLTEILRGGRSRLVFGTLAILLCLVLGVAIVTQVRQTDSGDSLETARPADLLVLLDSLRQREATLNAEVIDLQNTLNALQASGNTDQAALESAQARLAALSILVGAVGATGPGVMITIDDPGPGVAPEVMIDVINELRAAGAEAIQINDAHRSVRVGVDTWVVGVPGSLTVDTKVLSPPYSILAIGDPPTLAAAMNIPGGAQDGVKRVGGRMVVQQADRVDVTALRQPKQHQYAQPVK</sequence>
<proteinExistence type="inferred from homology"/>
<gene>
    <name type="ordered locus">BQ2027_MB1856</name>
</gene>
<evidence type="ECO:0000255" key="1"/>
<evidence type="ECO:0000256" key="2">
    <source>
        <dbReference type="SAM" id="MobiDB-lite"/>
    </source>
</evidence>
<evidence type="ECO:0000305" key="3"/>
<feature type="signal peptide" evidence="1">
    <location>
        <begin position="1"/>
        <end position="28"/>
    </location>
</feature>
<feature type="chain" id="PRO_0000014113" description="UPF0749 protein Mb1856">
    <location>
        <begin position="29"/>
        <end position="292"/>
    </location>
</feature>
<feature type="transmembrane region" description="Helical" evidence="1">
    <location>
        <begin position="68"/>
        <end position="88"/>
    </location>
</feature>
<feature type="transmembrane region" description="Helical" evidence="1">
    <location>
        <begin position="152"/>
        <end position="172"/>
    </location>
</feature>
<feature type="transmembrane region" description="Helical" evidence="1">
    <location>
        <begin position="229"/>
        <end position="249"/>
    </location>
</feature>
<feature type="region of interest" description="Disordered" evidence="2">
    <location>
        <begin position="1"/>
        <end position="30"/>
    </location>
</feature>
<organism>
    <name type="scientific">Mycobacterium bovis (strain ATCC BAA-935 / AF2122/97)</name>
    <dbReference type="NCBI Taxonomy" id="233413"/>
    <lineage>
        <taxon>Bacteria</taxon>
        <taxon>Bacillati</taxon>
        <taxon>Actinomycetota</taxon>
        <taxon>Actinomycetes</taxon>
        <taxon>Mycobacteriales</taxon>
        <taxon>Mycobacteriaceae</taxon>
        <taxon>Mycobacterium</taxon>
        <taxon>Mycobacterium tuberculosis complex</taxon>
    </lineage>
</organism>
<comment type="subcellular location">
    <subcellularLocation>
        <location evidence="3">Cell membrane</location>
        <topology evidence="3">Multi-pass membrane protein</topology>
    </subcellularLocation>
</comment>
<comment type="similarity">
    <text evidence="3">Belongs to the UPF0749 family.</text>
</comment>